<dbReference type="EMBL" id="CP000034">
    <property type="protein sequence ID" value="ABB60417.1"/>
    <property type="molecule type" value="Genomic_DNA"/>
</dbReference>
<dbReference type="RefSeq" id="WP_000246882.1">
    <property type="nucleotide sequence ID" value="NC_007606.1"/>
</dbReference>
<dbReference type="RefSeq" id="YP_401906.1">
    <property type="nucleotide sequence ID" value="NC_007606.1"/>
</dbReference>
<dbReference type="SMR" id="Q32JU0"/>
<dbReference type="STRING" id="300267.SDY_0185"/>
<dbReference type="EnsemblBacteria" id="ABB60417">
    <property type="protein sequence ID" value="ABB60417"/>
    <property type="gene ID" value="SDY_0185"/>
</dbReference>
<dbReference type="GeneID" id="89519558"/>
<dbReference type="KEGG" id="sdy:SDY_0185"/>
<dbReference type="PATRIC" id="fig|300267.13.peg.214"/>
<dbReference type="HOGENOM" id="CLU_040318_1_2_6"/>
<dbReference type="Proteomes" id="UP000002716">
    <property type="component" value="Chromosome"/>
</dbReference>
<dbReference type="GO" id="GO:0022627">
    <property type="term" value="C:cytosolic small ribosomal subunit"/>
    <property type="evidence" value="ECO:0007669"/>
    <property type="project" value="TreeGrafter"/>
</dbReference>
<dbReference type="GO" id="GO:0003735">
    <property type="term" value="F:structural constituent of ribosome"/>
    <property type="evidence" value="ECO:0007669"/>
    <property type="project" value="InterPro"/>
</dbReference>
<dbReference type="GO" id="GO:0006412">
    <property type="term" value="P:translation"/>
    <property type="evidence" value="ECO:0007669"/>
    <property type="project" value="UniProtKB-UniRule"/>
</dbReference>
<dbReference type="CDD" id="cd01425">
    <property type="entry name" value="RPS2"/>
    <property type="match status" value="1"/>
</dbReference>
<dbReference type="FunFam" id="1.10.287.610:FF:000001">
    <property type="entry name" value="30S ribosomal protein S2"/>
    <property type="match status" value="1"/>
</dbReference>
<dbReference type="Gene3D" id="3.40.50.10490">
    <property type="entry name" value="Glucose-6-phosphate isomerase like protein, domain 1"/>
    <property type="match status" value="1"/>
</dbReference>
<dbReference type="Gene3D" id="1.10.287.610">
    <property type="entry name" value="Helix hairpin bin"/>
    <property type="match status" value="1"/>
</dbReference>
<dbReference type="HAMAP" id="MF_00291_B">
    <property type="entry name" value="Ribosomal_uS2_B"/>
    <property type="match status" value="1"/>
</dbReference>
<dbReference type="InterPro" id="IPR001865">
    <property type="entry name" value="Ribosomal_uS2"/>
</dbReference>
<dbReference type="InterPro" id="IPR005706">
    <property type="entry name" value="Ribosomal_uS2_bac/mit/plastid"/>
</dbReference>
<dbReference type="InterPro" id="IPR018130">
    <property type="entry name" value="Ribosomal_uS2_CS"/>
</dbReference>
<dbReference type="InterPro" id="IPR023591">
    <property type="entry name" value="Ribosomal_uS2_flav_dom_sf"/>
</dbReference>
<dbReference type="NCBIfam" id="TIGR01011">
    <property type="entry name" value="rpsB_bact"/>
    <property type="match status" value="1"/>
</dbReference>
<dbReference type="PANTHER" id="PTHR12534">
    <property type="entry name" value="30S RIBOSOMAL PROTEIN S2 PROKARYOTIC AND ORGANELLAR"/>
    <property type="match status" value="1"/>
</dbReference>
<dbReference type="PANTHER" id="PTHR12534:SF0">
    <property type="entry name" value="SMALL RIBOSOMAL SUBUNIT PROTEIN US2M"/>
    <property type="match status" value="1"/>
</dbReference>
<dbReference type="Pfam" id="PF00318">
    <property type="entry name" value="Ribosomal_S2"/>
    <property type="match status" value="1"/>
</dbReference>
<dbReference type="PRINTS" id="PR00395">
    <property type="entry name" value="RIBOSOMALS2"/>
</dbReference>
<dbReference type="SUPFAM" id="SSF52313">
    <property type="entry name" value="Ribosomal protein S2"/>
    <property type="match status" value="1"/>
</dbReference>
<dbReference type="PROSITE" id="PS00962">
    <property type="entry name" value="RIBOSOMAL_S2_1"/>
    <property type="match status" value="1"/>
</dbReference>
<dbReference type="PROSITE" id="PS00963">
    <property type="entry name" value="RIBOSOMAL_S2_2"/>
    <property type="match status" value="1"/>
</dbReference>
<keyword id="KW-1185">Reference proteome</keyword>
<keyword id="KW-0687">Ribonucleoprotein</keyword>
<keyword id="KW-0689">Ribosomal protein</keyword>
<name>RS2_SHIDS</name>
<reference key="1">
    <citation type="journal article" date="2005" name="Nucleic Acids Res.">
        <title>Genome dynamics and diversity of Shigella species, the etiologic agents of bacillary dysentery.</title>
        <authorList>
            <person name="Yang F."/>
            <person name="Yang J."/>
            <person name="Zhang X."/>
            <person name="Chen L."/>
            <person name="Jiang Y."/>
            <person name="Yan Y."/>
            <person name="Tang X."/>
            <person name="Wang J."/>
            <person name="Xiong Z."/>
            <person name="Dong J."/>
            <person name="Xue Y."/>
            <person name="Zhu Y."/>
            <person name="Xu X."/>
            <person name="Sun L."/>
            <person name="Chen S."/>
            <person name="Nie H."/>
            <person name="Peng J."/>
            <person name="Xu J."/>
            <person name="Wang Y."/>
            <person name="Yuan Z."/>
            <person name="Wen Y."/>
            <person name="Yao Z."/>
            <person name="Shen Y."/>
            <person name="Qiang B."/>
            <person name="Hou Y."/>
            <person name="Yu J."/>
            <person name="Jin Q."/>
        </authorList>
    </citation>
    <scope>NUCLEOTIDE SEQUENCE [LARGE SCALE GENOMIC DNA]</scope>
    <source>
        <strain>Sd197</strain>
    </source>
</reference>
<accession>Q32JU0</accession>
<feature type="chain" id="PRO_1000004072" description="Small ribosomal subunit protein uS2">
    <location>
        <begin position="1"/>
        <end position="241"/>
    </location>
</feature>
<evidence type="ECO:0000255" key="1">
    <source>
        <dbReference type="HAMAP-Rule" id="MF_00291"/>
    </source>
</evidence>
<evidence type="ECO:0000305" key="2"/>
<protein>
    <recommendedName>
        <fullName evidence="1">Small ribosomal subunit protein uS2</fullName>
    </recommendedName>
    <alternativeName>
        <fullName evidence="2">30S ribosomal protein S2</fullName>
    </alternativeName>
</protein>
<comment type="similarity">
    <text evidence="1">Belongs to the universal ribosomal protein uS2 family.</text>
</comment>
<proteinExistence type="inferred from homology"/>
<sequence>MATVSMRDMLKAGVHFGHQTRYWNPKMKPFIFGARNKVHIINLEKTVPMFNEALAELNKIASRKGKILFVGTKRAASEAVKDAALSCDQFFVNHRWLGGMLTNWKTVRQSIKRLKDLETQSQDGTFDKLTKKEALMRTRELEKLENSLGGIKDMGGLPDALFVIDADHEHIAIKEANNLGIPVFAIVDTNSDPDGVDFVIPGNDDAIRAVTLYLGAVAATVREGRSQDLASQAEESFVEAE</sequence>
<gene>
    <name evidence="1" type="primary">rpsB</name>
    <name type="ordered locus">SDY_0185</name>
</gene>
<organism>
    <name type="scientific">Shigella dysenteriae serotype 1 (strain Sd197)</name>
    <dbReference type="NCBI Taxonomy" id="300267"/>
    <lineage>
        <taxon>Bacteria</taxon>
        <taxon>Pseudomonadati</taxon>
        <taxon>Pseudomonadota</taxon>
        <taxon>Gammaproteobacteria</taxon>
        <taxon>Enterobacterales</taxon>
        <taxon>Enterobacteriaceae</taxon>
        <taxon>Shigella</taxon>
    </lineage>
</organism>